<evidence type="ECO:0000255" key="1">
    <source>
        <dbReference type="HAMAP-Rule" id="MF_01343"/>
    </source>
</evidence>
<evidence type="ECO:0000305" key="2"/>
<feature type="chain" id="PRO_0000115503" description="Small ribosomal subunit protein uS15">
    <location>
        <begin position="1"/>
        <end position="89"/>
    </location>
</feature>
<reference key="1">
    <citation type="journal article" date="2003" name="J. Bacteriol.">
        <title>Complete genome sequence of the oral pathogenic bacterium Porphyromonas gingivalis strain W83.</title>
        <authorList>
            <person name="Nelson K.E."/>
            <person name="Fleischmann R.D."/>
            <person name="DeBoy R.T."/>
            <person name="Paulsen I.T."/>
            <person name="Fouts D.E."/>
            <person name="Eisen J.A."/>
            <person name="Daugherty S.C."/>
            <person name="Dodson R.J."/>
            <person name="Durkin A.S."/>
            <person name="Gwinn M.L."/>
            <person name="Haft D.H."/>
            <person name="Kolonay J.F."/>
            <person name="Nelson W.C."/>
            <person name="Mason T.M."/>
            <person name="Tallon L."/>
            <person name="Gray J."/>
            <person name="Granger D."/>
            <person name="Tettelin H."/>
            <person name="Dong H."/>
            <person name="Galvin J.L."/>
            <person name="Duncan M.J."/>
            <person name="Dewhirst F.E."/>
            <person name="Fraser C.M."/>
        </authorList>
    </citation>
    <scope>NUCLEOTIDE SEQUENCE [LARGE SCALE GENOMIC DNA]</scope>
    <source>
        <strain>ATCC BAA-308 / W83</strain>
    </source>
</reference>
<protein>
    <recommendedName>
        <fullName evidence="1">Small ribosomal subunit protein uS15</fullName>
    </recommendedName>
    <alternativeName>
        <fullName evidence="2">30S ribosomal protein S15</fullName>
    </alternativeName>
</protein>
<dbReference type="EMBL" id="AE015924">
    <property type="protein sequence ID" value="AAQ66759.1"/>
    <property type="molecule type" value="Genomic_DNA"/>
</dbReference>
<dbReference type="RefSeq" id="WP_004584741.1">
    <property type="nucleotide sequence ID" value="NC_002950.2"/>
</dbReference>
<dbReference type="SMR" id="Q7MU16"/>
<dbReference type="STRING" id="242619.PG_1758"/>
<dbReference type="EnsemblBacteria" id="AAQ66759">
    <property type="protein sequence ID" value="AAQ66759"/>
    <property type="gene ID" value="PG_1758"/>
</dbReference>
<dbReference type="GeneID" id="29256863"/>
<dbReference type="GeneID" id="57240457"/>
<dbReference type="KEGG" id="pgi:PG_1758"/>
<dbReference type="eggNOG" id="COG0184">
    <property type="taxonomic scope" value="Bacteria"/>
</dbReference>
<dbReference type="HOGENOM" id="CLU_148518_0_1_10"/>
<dbReference type="Proteomes" id="UP000000588">
    <property type="component" value="Chromosome"/>
</dbReference>
<dbReference type="GO" id="GO:0022627">
    <property type="term" value="C:cytosolic small ribosomal subunit"/>
    <property type="evidence" value="ECO:0007669"/>
    <property type="project" value="TreeGrafter"/>
</dbReference>
<dbReference type="GO" id="GO:0019843">
    <property type="term" value="F:rRNA binding"/>
    <property type="evidence" value="ECO:0007669"/>
    <property type="project" value="UniProtKB-UniRule"/>
</dbReference>
<dbReference type="GO" id="GO:0003735">
    <property type="term" value="F:structural constituent of ribosome"/>
    <property type="evidence" value="ECO:0007669"/>
    <property type="project" value="InterPro"/>
</dbReference>
<dbReference type="GO" id="GO:0006412">
    <property type="term" value="P:translation"/>
    <property type="evidence" value="ECO:0007669"/>
    <property type="project" value="UniProtKB-UniRule"/>
</dbReference>
<dbReference type="CDD" id="cd00353">
    <property type="entry name" value="Ribosomal_S15p_S13e"/>
    <property type="match status" value="1"/>
</dbReference>
<dbReference type="FunFam" id="1.10.287.10:FF:000002">
    <property type="entry name" value="30S ribosomal protein S15"/>
    <property type="match status" value="1"/>
</dbReference>
<dbReference type="Gene3D" id="6.10.250.3130">
    <property type="match status" value="1"/>
</dbReference>
<dbReference type="Gene3D" id="1.10.287.10">
    <property type="entry name" value="S15/NS1, RNA-binding"/>
    <property type="match status" value="1"/>
</dbReference>
<dbReference type="HAMAP" id="MF_01343_B">
    <property type="entry name" value="Ribosomal_uS15_B"/>
    <property type="match status" value="1"/>
</dbReference>
<dbReference type="InterPro" id="IPR000589">
    <property type="entry name" value="Ribosomal_uS15"/>
</dbReference>
<dbReference type="InterPro" id="IPR005290">
    <property type="entry name" value="Ribosomal_uS15_bac-type"/>
</dbReference>
<dbReference type="InterPro" id="IPR009068">
    <property type="entry name" value="uS15_NS1_RNA-bd_sf"/>
</dbReference>
<dbReference type="NCBIfam" id="TIGR00952">
    <property type="entry name" value="S15_bact"/>
    <property type="match status" value="1"/>
</dbReference>
<dbReference type="PANTHER" id="PTHR23321">
    <property type="entry name" value="RIBOSOMAL PROTEIN S15, BACTERIAL AND ORGANELLAR"/>
    <property type="match status" value="1"/>
</dbReference>
<dbReference type="PANTHER" id="PTHR23321:SF26">
    <property type="entry name" value="SMALL RIBOSOMAL SUBUNIT PROTEIN US15M"/>
    <property type="match status" value="1"/>
</dbReference>
<dbReference type="Pfam" id="PF00312">
    <property type="entry name" value="Ribosomal_S15"/>
    <property type="match status" value="1"/>
</dbReference>
<dbReference type="SMART" id="SM01387">
    <property type="entry name" value="Ribosomal_S15"/>
    <property type="match status" value="1"/>
</dbReference>
<dbReference type="SUPFAM" id="SSF47060">
    <property type="entry name" value="S15/NS1 RNA-binding domain"/>
    <property type="match status" value="1"/>
</dbReference>
<dbReference type="PROSITE" id="PS00362">
    <property type="entry name" value="RIBOSOMAL_S15"/>
    <property type="match status" value="1"/>
</dbReference>
<gene>
    <name evidence="1" type="primary">rpsO</name>
    <name type="ordered locus">PG_1758</name>
</gene>
<keyword id="KW-1185">Reference proteome</keyword>
<keyword id="KW-0687">Ribonucleoprotein</keyword>
<keyword id="KW-0689">Ribosomal protein</keyword>
<keyword id="KW-0694">RNA-binding</keyword>
<keyword id="KW-0699">rRNA-binding</keyword>
<name>RS15_PORGI</name>
<proteinExistence type="inferred from homology"/>
<accession>Q7MU16</accession>
<sequence>MYLDSAKKAELFEKYGKSVKDTGSPESQIALFTFRIAHLTEHLRQNKKDFATERSLKMLVGKRRRMLDYLIKVDIERYRAIIKELGIRR</sequence>
<comment type="function">
    <text evidence="1">One of the primary rRNA binding proteins, it binds directly to 16S rRNA where it helps nucleate assembly of the platform of the 30S subunit by binding and bridging several RNA helices of the 16S rRNA.</text>
</comment>
<comment type="function">
    <text evidence="1">Forms an intersubunit bridge (bridge B4) with the 23S rRNA of the 50S subunit in the ribosome.</text>
</comment>
<comment type="subunit">
    <text evidence="1">Part of the 30S ribosomal subunit. Forms a bridge to the 50S subunit in the 70S ribosome, contacting the 23S rRNA.</text>
</comment>
<comment type="similarity">
    <text evidence="1">Belongs to the universal ribosomal protein uS15 family.</text>
</comment>
<organism>
    <name type="scientific">Porphyromonas gingivalis (strain ATCC BAA-308 / W83)</name>
    <dbReference type="NCBI Taxonomy" id="242619"/>
    <lineage>
        <taxon>Bacteria</taxon>
        <taxon>Pseudomonadati</taxon>
        <taxon>Bacteroidota</taxon>
        <taxon>Bacteroidia</taxon>
        <taxon>Bacteroidales</taxon>
        <taxon>Porphyromonadaceae</taxon>
        <taxon>Porphyromonas</taxon>
    </lineage>
</organism>